<dbReference type="EC" id="2.1.3.2" evidence="1"/>
<dbReference type="EMBL" id="AP010918">
    <property type="protein sequence ID" value="BAH25704.1"/>
    <property type="molecule type" value="Genomic_DNA"/>
</dbReference>
<dbReference type="RefSeq" id="WP_003407200.1">
    <property type="nucleotide sequence ID" value="NZ_CP014566.1"/>
</dbReference>
<dbReference type="SMR" id="C1AN25"/>
<dbReference type="KEGG" id="mbt:JTY_1416"/>
<dbReference type="HOGENOM" id="CLU_043846_2_0_11"/>
<dbReference type="UniPathway" id="UPA00070">
    <property type="reaction ID" value="UER00116"/>
</dbReference>
<dbReference type="GO" id="GO:0005829">
    <property type="term" value="C:cytosol"/>
    <property type="evidence" value="ECO:0007669"/>
    <property type="project" value="TreeGrafter"/>
</dbReference>
<dbReference type="GO" id="GO:0016597">
    <property type="term" value="F:amino acid binding"/>
    <property type="evidence" value="ECO:0007669"/>
    <property type="project" value="InterPro"/>
</dbReference>
<dbReference type="GO" id="GO:0004070">
    <property type="term" value="F:aspartate carbamoyltransferase activity"/>
    <property type="evidence" value="ECO:0007669"/>
    <property type="project" value="UniProtKB-UniRule"/>
</dbReference>
<dbReference type="GO" id="GO:0006207">
    <property type="term" value="P:'de novo' pyrimidine nucleobase biosynthetic process"/>
    <property type="evidence" value="ECO:0007669"/>
    <property type="project" value="InterPro"/>
</dbReference>
<dbReference type="GO" id="GO:0044205">
    <property type="term" value="P:'de novo' UMP biosynthetic process"/>
    <property type="evidence" value="ECO:0007669"/>
    <property type="project" value="UniProtKB-UniRule"/>
</dbReference>
<dbReference type="GO" id="GO:0006520">
    <property type="term" value="P:amino acid metabolic process"/>
    <property type="evidence" value="ECO:0007669"/>
    <property type="project" value="InterPro"/>
</dbReference>
<dbReference type="FunFam" id="3.40.50.1370:FF:000007">
    <property type="entry name" value="Aspartate carbamoyltransferase"/>
    <property type="match status" value="1"/>
</dbReference>
<dbReference type="FunFam" id="3.40.50.1370:FF:000012">
    <property type="entry name" value="Aspartate carbamoyltransferase"/>
    <property type="match status" value="1"/>
</dbReference>
<dbReference type="Gene3D" id="3.40.50.1370">
    <property type="entry name" value="Aspartate/ornithine carbamoyltransferase"/>
    <property type="match status" value="2"/>
</dbReference>
<dbReference type="HAMAP" id="MF_00001">
    <property type="entry name" value="Asp_carb_tr"/>
    <property type="match status" value="1"/>
</dbReference>
<dbReference type="InterPro" id="IPR006132">
    <property type="entry name" value="Asp/Orn_carbamoyltranf_P-bd"/>
</dbReference>
<dbReference type="InterPro" id="IPR006130">
    <property type="entry name" value="Asp/Orn_carbamoylTrfase"/>
</dbReference>
<dbReference type="InterPro" id="IPR036901">
    <property type="entry name" value="Asp/Orn_carbamoylTrfase_sf"/>
</dbReference>
<dbReference type="InterPro" id="IPR002082">
    <property type="entry name" value="Asp_carbamoyltransf"/>
</dbReference>
<dbReference type="InterPro" id="IPR006131">
    <property type="entry name" value="Asp_carbamoyltransf_Asp/Orn-bd"/>
</dbReference>
<dbReference type="NCBIfam" id="TIGR00670">
    <property type="entry name" value="asp_carb_tr"/>
    <property type="match status" value="1"/>
</dbReference>
<dbReference type="NCBIfam" id="NF002032">
    <property type="entry name" value="PRK00856.1"/>
    <property type="match status" value="1"/>
</dbReference>
<dbReference type="PANTHER" id="PTHR45753:SF6">
    <property type="entry name" value="ASPARTATE CARBAMOYLTRANSFERASE"/>
    <property type="match status" value="1"/>
</dbReference>
<dbReference type="PANTHER" id="PTHR45753">
    <property type="entry name" value="ORNITHINE CARBAMOYLTRANSFERASE, MITOCHONDRIAL"/>
    <property type="match status" value="1"/>
</dbReference>
<dbReference type="Pfam" id="PF00185">
    <property type="entry name" value="OTCace"/>
    <property type="match status" value="1"/>
</dbReference>
<dbReference type="Pfam" id="PF02729">
    <property type="entry name" value="OTCace_N"/>
    <property type="match status" value="1"/>
</dbReference>
<dbReference type="PRINTS" id="PR00100">
    <property type="entry name" value="AOTCASE"/>
</dbReference>
<dbReference type="PRINTS" id="PR00101">
    <property type="entry name" value="ATCASE"/>
</dbReference>
<dbReference type="SUPFAM" id="SSF53671">
    <property type="entry name" value="Aspartate/ornithine carbamoyltransferase"/>
    <property type="match status" value="1"/>
</dbReference>
<dbReference type="PROSITE" id="PS00097">
    <property type="entry name" value="CARBAMOYLTRANSFERASE"/>
    <property type="match status" value="1"/>
</dbReference>
<reference key="1">
    <citation type="journal article" date="2009" name="Vaccine">
        <title>Whole genome sequence analysis of Mycobacterium bovis bacillus Calmette-Guerin (BCG) Tokyo 172: a comparative study of BCG vaccine substrains.</title>
        <authorList>
            <person name="Seki M."/>
            <person name="Honda I."/>
            <person name="Fujita I."/>
            <person name="Yano I."/>
            <person name="Yamamoto S."/>
            <person name="Koyama A."/>
        </authorList>
    </citation>
    <scope>NUCLEOTIDE SEQUENCE [LARGE SCALE GENOMIC DNA]</scope>
    <source>
        <strain>BCG / Tokyo 172 / ATCC 35737 / TMC 1019</strain>
    </source>
</reference>
<name>PYRB_MYCBT</name>
<keyword id="KW-0665">Pyrimidine biosynthesis</keyword>
<keyword id="KW-0808">Transferase</keyword>
<gene>
    <name evidence="1" type="primary">pyrB</name>
    <name type="ordered locus">JTY_1416</name>
</gene>
<comment type="function">
    <text evidence="1">Catalyzes the condensation of carbamoyl phosphate and aspartate to form carbamoyl aspartate and inorganic phosphate, the committed step in the de novo pyrimidine nucleotide biosynthesis pathway.</text>
</comment>
<comment type="catalytic activity">
    <reaction evidence="1">
        <text>carbamoyl phosphate + L-aspartate = N-carbamoyl-L-aspartate + phosphate + H(+)</text>
        <dbReference type="Rhea" id="RHEA:20013"/>
        <dbReference type="ChEBI" id="CHEBI:15378"/>
        <dbReference type="ChEBI" id="CHEBI:29991"/>
        <dbReference type="ChEBI" id="CHEBI:32814"/>
        <dbReference type="ChEBI" id="CHEBI:43474"/>
        <dbReference type="ChEBI" id="CHEBI:58228"/>
        <dbReference type="EC" id="2.1.3.2"/>
    </reaction>
</comment>
<comment type="pathway">
    <text evidence="1">Pyrimidine metabolism; UMP biosynthesis via de novo pathway; (S)-dihydroorotate from bicarbonate: step 2/3.</text>
</comment>
<comment type="subunit">
    <text evidence="1">Heterododecamer (2C3:3R2) of six catalytic PyrB chains organized as two trimers (C3), and six regulatory PyrI chains organized as three dimers (R2).</text>
</comment>
<comment type="similarity">
    <text evidence="1">Belongs to the aspartate/ornithine carbamoyltransferase superfamily. ATCase family.</text>
</comment>
<accession>C1AN25</accession>
<feature type="chain" id="PRO_1000116151" description="Aspartate carbamoyltransferase catalytic subunit">
    <location>
        <begin position="1"/>
        <end position="319"/>
    </location>
</feature>
<feature type="binding site" evidence="1">
    <location>
        <position position="57"/>
    </location>
    <ligand>
        <name>carbamoyl phosphate</name>
        <dbReference type="ChEBI" id="CHEBI:58228"/>
    </ligand>
</feature>
<feature type="binding site" evidence="1">
    <location>
        <position position="58"/>
    </location>
    <ligand>
        <name>carbamoyl phosphate</name>
        <dbReference type="ChEBI" id="CHEBI:58228"/>
    </ligand>
</feature>
<feature type="binding site" evidence="1">
    <location>
        <position position="85"/>
    </location>
    <ligand>
        <name>L-aspartate</name>
        <dbReference type="ChEBI" id="CHEBI:29991"/>
    </ligand>
</feature>
<feature type="binding site" evidence="1">
    <location>
        <position position="107"/>
    </location>
    <ligand>
        <name>carbamoyl phosphate</name>
        <dbReference type="ChEBI" id="CHEBI:58228"/>
    </ligand>
</feature>
<feature type="binding site" evidence="1">
    <location>
        <position position="140"/>
    </location>
    <ligand>
        <name>carbamoyl phosphate</name>
        <dbReference type="ChEBI" id="CHEBI:58228"/>
    </ligand>
</feature>
<feature type="binding site" evidence="1">
    <location>
        <position position="143"/>
    </location>
    <ligand>
        <name>carbamoyl phosphate</name>
        <dbReference type="ChEBI" id="CHEBI:58228"/>
    </ligand>
</feature>
<feature type="binding site" evidence="1">
    <location>
        <position position="173"/>
    </location>
    <ligand>
        <name>L-aspartate</name>
        <dbReference type="ChEBI" id="CHEBI:29991"/>
    </ligand>
</feature>
<feature type="binding site" evidence="1">
    <location>
        <position position="227"/>
    </location>
    <ligand>
        <name>L-aspartate</name>
        <dbReference type="ChEBI" id="CHEBI:29991"/>
    </ligand>
</feature>
<feature type="binding site" evidence="1">
    <location>
        <position position="268"/>
    </location>
    <ligand>
        <name>carbamoyl phosphate</name>
        <dbReference type="ChEBI" id="CHEBI:58228"/>
    </ligand>
</feature>
<feature type="binding site" evidence="1">
    <location>
        <position position="269"/>
    </location>
    <ligand>
        <name>carbamoyl phosphate</name>
        <dbReference type="ChEBI" id="CHEBI:58228"/>
    </ligand>
</feature>
<sequence>MTPRHLLTAADLSRDDATAILDDADRFAQALVGRDIKKLPTLRGRTVVTMFYENSTRTRVSFEVAGKWMSADVINVSAAGSSVGKGESLRDTALTLRAAGADALIIRHPASGAAHLLAQWTGAHNDGPAVINAGDGTHEHPTQALLDALTIRQRLGGIEGRRIVIVGDILHSRVARSNVMLLDTLGAEVVLVAPPTLLPVGVTGWPATVSHDFDAELPAADAVLMLRVQAERMNGGFFPSVREYSVRYGLTERRQAMLPGHAVVLHPGPMVRGMEITSSVADSSQSAVLQQVSNGVQVRMAVLFHVLVGAQDAGKEGAA</sequence>
<protein>
    <recommendedName>
        <fullName evidence="1">Aspartate carbamoyltransferase catalytic subunit</fullName>
        <ecNumber evidence="1">2.1.3.2</ecNumber>
    </recommendedName>
    <alternativeName>
        <fullName evidence="1">Aspartate transcarbamylase</fullName>
        <shortName evidence="1">ATCase</shortName>
    </alternativeName>
</protein>
<proteinExistence type="inferred from homology"/>
<organism>
    <name type="scientific">Mycobacterium bovis (strain BCG / Tokyo 172 / ATCC 35737 / TMC 1019)</name>
    <dbReference type="NCBI Taxonomy" id="561275"/>
    <lineage>
        <taxon>Bacteria</taxon>
        <taxon>Bacillati</taxon>
        <taxon>Actinomycetota</taxon>
        <taxon>Actinomycetes</taxon>
        <taxon>Mycobacteriales</taxon>
        <taxon>Mycobacteriaceae</taxon>
        <taxon>Mycobacterium</taxon>
        <taxon>Mycobacterium tuberculosis complex</taxon>
    </lineage>
</organism>
<evidence type="ECO:0000255" key="1">
    <source>
        <dbReference type="HAMAP-Rule" id="MF_00001"/>
    </source>
</evidence>